<sequence>MAESKLVIGDRSFASRLIMGTGGATNLAVLEQALIASGTELTTVAIRRVDADGGTGLLDLLNRLGITPLPNTAGSRSAAEAVLTAQLAREALNTNWVKLEVIADERTLWPDAVELVRAAEQLVDDGFVVLPYTTDDPVLARRLEDTGCAAVMPLGSPIGTGLGIANPHNIEMIVAGARVPVVLDAGIGTASDAALAMELGCDAVLLASAVTRAADPPAMAAAMAAAVTAGYLARCAGRIPKRFWAQASSPAR</sequence>
<evidence type="ECO:0000255" key="1">
    <source>
        <dbReference type="HAMAP-Rule" id="MF_00443"/>
    </source>
</evidence>
<comment type="function">
    <text evidence="1">Catalyzes the rearrangement of 1-deoxy-D-xylulose 5-phosphate (DXP) to produce the thiazole phosphate moiety of thiamine. Sulfur is provided by the thiocarboxylate moiety of the carrier protein ThiS. In vitro, sulfur can be provided by H(2)S.</text>
</comment>
<comment type="catalytic activity">
    <reaction evidence="1">
        <text>[ThiS sulfur-carrier protein]-C-terminal-Gly-aminoethanethioate + 2-iminoacetate + 1-deoxy-D-xylulose 5-phosphate = [ThiS sulfur-carrier protein]-C-terminal Gly-Gly + 2-[(2R,5Z)-2-carboxy-4-methylthiazol-5(2H)-ylidene]ethyl phosphate + 2 H2O + H(+)</text>
        <dbReference type="Rhea" id="RHEA:26297"/>
        <dbReference type="Rhea" id="RHEA-COMP:12909"/>
        <dbReference type="Rhea" id="RHEA-COMP:19908"/>
        <dbReference type="ChEBI" id="CHEBI:15377"/>
        <dbReference type="ChEBI" id="CHEBI:15378"/>
        <dbReference type="ChEBI" id="CHEBI:57792"/>
        <dbReference type="ChEBI" id="CHEBI:62899"/>
        <dbReference type="ChEBI" id="CHEBI:77846"/>
        <dbReference type="ChEBI" id="CHEBI:90778"/>
        <dbReference type="ChEBI" id="CHEBI:232372"/>
        <dbReference type="EC" id="2.8.1.10"/>
    </reaction>
</comment>
<comment type="pathway">
    <text evidence="1">Cofactor biosynthesis; thiamine diphosphate biosynthesis.</text>
</comment>
<comment type="subunit">
    <text evidence="1">Homotetramer. Forms heterodimers with either ThiH or ThiS.</text>
</comment>
<comment type="subcellular location">
    <subcellularLocation>
        <location evidence="1">Cytoplasm</location>
    </subcellularLocation>
</comment>
<comment type="similarity">
    <text evidence="1">Belongs to the ThiG family.</text>
</comment>
<organism>
    <name type="scientific">Mycobacterium tuberculosis (strain ATCC 25177 / H37Ra)</name>
    <dbReference type="NCBI Taxonomy" id="419947"/>
    <lineage>
        <taxon>Bacteria</taxon>
        <taxon>Bacillati</taxon>
        <taxon>Actinomycetota</taxon>
        <taxon>Actinomycetes</taxon>
        <taxon>Mycobacteriales</taxon>
        <taxon>Mycobacteriaceae</taxon>
        <taxon>Mycobacterium</taxon>
        <taxon>Mycobacterium tuberculosis complex</taxon>
    </lineage>
</organism>
<dbReference type="EC" id="2.8.1.10" evidence="1"/>
<dbReference type="EMBL" id="CP000611">
    <property type="protein sequence ID" value="ABQ72143.1"/>
    <property type="molecule type" value="Genomic_DNA"/>
</dbReference>
<dbReference type="RefSeq" id="WP_003916659.1">
    <property type="nucleotide sequence ID" value="NZ_CP016972.1"/>
</dbReference>
<dbReference type="SMR" id="A5TZE3"/>
<dbReference type="KEGG" id="mra:MRA_0423"/>
<dbReference type="eggNOG" id="COG2022">
    <property type="taxonomic scope" value="Bacteria"/>
</dbReference>
<dbReference type="HOGENOM" id="CLU_062233_1_0_11"/>
<dbReference type="BRENDA" id="2.8.1.10">
    <property type="organism ID" value="3445"/>
</dbReference>
<dbReference type="UniPathway" id="UPA00060"/>
<dbReference type="Proteomes" id="UP000001988">
    <property type="component" value="Chromosome"/>
</dbReference>
<dbReference type="GO" id="GO:0005737">
    <property type="term" value="C:cytoplasm"/>
    <property type="evidence" value="ECO:0007669"/>
    <property type="project" value="UniProtKB-SubCell"/>
</dbReference>
<dbReference type="GO" id="GO:1990107">
    <property type="term" value="F:thiazole synthase activity"/>
    <property type="evidence" value="ECO:0007669"/>
    <property type="project" value="UniProtKB-EC"/>
</dbReference>
<dbReference type="GO" id="GO:0009229">
    <property type="term" value="P:thiamine diphosphate biosynthetic process"/>
    <property type="evidence" value="ECO:0007669"/>
    <property type="project" value="UniProtKB-UniRule"/>
</dbReference>
<dbReference type="CDD" id="cd04728">
    <property type="entry name" value="ThiG"/>
    <property type="match status" value="1"/>
</dbReference>
<dbReference type="Gene3D" id="3.20.20.70">
    <property type="entry name" value="Aldolase class I"/>
    <property type="match status" value="1"/>
</dbReference>
<dbReference type="HAMAP" id="MF_00443">
    <property type="entry name" value="ThiG"/>
    <property type="match status" value="1"/>
</dbReference>
<dbReference type="InterPro" id="IPR013785">
    <property type="entry name" value="Aldolase_TIM"/>
</dbReference>
<dbReference type="InterPro" id="IPR033983">
    <property type="entry name" value="Thiazole_synthase_ThiG"/>
</dbReference>
<dbReference type="InterPro" id="IPR008867">
    <property type="entry name" value="ThiG"/>
</dbReference>
<dbReference type="PANTHER" id="PTHR34266">
    <property type="entry name" value="THIAZOLE SYNTHASE"/>
    <property type="match status" value="1"/>
</dbReference>
<dbReference type="PANTHER" id="PTHR34266:SF2">
    <property type="entry name" value="THIAZOLE SYNTHASE"/>
    <property type="match status" value="1"/>
</dbReference>
<dbReference type="Pfam" id="PF05690">
    <property type="entry name" value="ThiG"/>
    <property type="match status" value="1"/>
</dbReference>
<dbReference type="SUPFAM" id="SSF110399">
    <property type="entry name" value="ThiG-like"/>
    <property type="match status" value="1"/>
</dbReference>
<name>THIG_MYCTA</name>
<accession>A5TZE3</accession>
<feature type="chain" id="PRO_1000026014" description="Thiazole synthase">
    <location>
        <begin position="1"/>
        <end position="252"/>
    </location>
</feature>
<feature type="active site" description="Schiff-base intermediate with DXP" evidence="1">
    <location>
        <position position="98"/>
    </location>
</feature>
<feature type="binding site" evidence="1">
    <location>
        <position position="159"/>
    </location>
    <ligand>
        <name>1-deoxy-D-xylulose 5-phosphate</name>
        <dbReference type="ChEBI" id="CHEBI:57792"/>
    </ligand>
</feature>
<feature type="binding site" evidence="1">
    <location>
        <begin position="185"/>
        <end position="186"/>
    </location>
    <ligand>
        <name>1-deoxy-D-xylulose 5-phosphate</name>
        <dbReference type="ChEBI" id="CHEBI:57792"/>
    </ligand>
</feature>
<feature type="binding site" evidence="1">
    <location>
        <begin position="207"/>
        <end position="208"/>
    </location>
    <ligand>
        <name>1-deoxy-D-xylulose 5-phosphate</name>
        <dbReference type="ChEBI" id="CHEBI:57792"/>
    </ligand>
</feature>
<reference key="1">
    <citation type="journal article" date="2008" name="PLoS ONE">
        <title>Genetic basis of virulence attenuation revealed by comparative genomic analysis of Mycobacterium tuberculosis strain H37Ra versus H37Rv.</title>
        <authorList>
            <person name="Zheng H."/>
            <person name="Lu L."/>
            <person name="Wang B."/>
            <person name="Pu S."/>
            <person name="Zhang X."/>
            <person name="Zhu G."/>
            <person name="Shi W."/>
            <person name="Zhang L."/>
            <person name="Wang H."/>
            <person name="Wang S."/>
            <person name="Zhao G."/>
            <person name="Zhang Y."/>
        </authorList>
    </citation>
    <scope>NUCLEOTIDE SEQUENCE [LARGE SCALE GENOMIC DNA]</scope>
    <source>
        <strain>ATCC 25177 / H37Ra</strain>
    </source>
</reference>
<gene>
    <name evidence="1" type="primary">thiG</name>
    <name type="ordered locus">MRA_0423</name>
</gene>
<proteinExistence type="inferred from homology"/>
<protein>
    <recommendedName>
        <fullName evidence="1">Thiazole synthase</fullName>
        <ecNumber evidence="1">2.8.1.10</ecNumber>
    </recommendedName>
</protein>
<keyword id="KW-0963">Cytoplasm</keyword>
<keyword id="KW-1185">Reference proteome</keyword>
<keyword id="KW-0704">Schiff base</keyword>
<keyword id="KW-0784">Thiamine biosynthesis</keyword>
<keyword id="KW-0808">Transferase</keyword>